<gene>
    <name type="primary">dcl-1</name>
    <name type="ORF">NCU08270</name>
</gene>
<feature type="chain" id="PRO_0000306783" description="Dicer-like protein 1">
    <location>
        <begin position="1"/>
        <end position="1584"/>
    </location>
</feature>
<feature type="domain" description="Helicase ATP-binding" evidence="5">
    <location>
        <begin position="129"/>
        <end position="310"/>
    </location>
</feature>
<feature type="domain" description="Helicase C-terminal" evidence="6">
    <location>
        <begin position="448"/>
        <end position="621"/>
    </location>
</feature>
<feature type="domain" description="Dicer dsRNA-binding fold" evidence="7">
    <location>
        <begin position="654"/>
        <end position="744"/>
    </location>
</feature>
<feature type="domain" description="PAZ" evidence="3">
    <location>
        <begin position="894"/>
        <end position="1028"/>
    </location>
</feature>
<feature type="domain" description="RNase III 1" evidence="4">
    <location>
        <begin position="1052"/>
        <end position="1207"/>
    </location>
</feature>
<feature type="domain" description="RNase III 2" evidence="4">
    <location>
        <begin position="1258"/>
        <end position="1424"/>
    </location>
</feature>
<feature type="domain" description="DRBM">
    <location>
        <begin position="1458"/>
        <end position="1545"/>
    </location>
</feature>
<feature type="region of interest" description="Disordered" evidence="8">
    <location>
        <begin position="31"/>
        <end position="60"/>
    </location>
</feature>
<feature type="short sequence motif" description="DEAH box">
    <location>
        <begin position="255"/>
        <end position="258"/>
    </location>
</feature>
<feature type="binding site" evidence="5">
    <location>
        <begin position="142"/>
        <end position="149"/>
    </location>
    <ligand>
        <name>ATP</name>
        <dbReference type="ChEBI" id="CHEBI:30616"/>
    </ligand>
</feature>
<feature type="binding site" evidence="1">
    <location>
        <position position="1298"/>
    </location>
    <ligand>
        <name>Mg(2+)</name>
        <dbReference type="ChEBI" id="CHEBI:18420"/>
    </ligand>
</feature>
<feature type="binding site" evidence="1">
    <location>
        <position position="1410"/>
    </location>
    <ligand>
        <name>Mg(2+)</name>
        <dbReference type="ChEBI" id="CHEBI:18420"/>
    </ligand>
</feature>
<feature type="binding site" evidence="1">
    <location>
        <position position="1413"/>
    </location>
    <ligand>
        <name>Mg(2+)</name>
        <dbReference type="ChEBI" id="CHEBI:18420"/>
    </ligand>
</feature>
<feature type="binding site" evidence="2">
    <location>
        <position position="1470"/>
    </location>
    <ligand>
        <name>Zn(2+)</name>
        <dbReference type="ChEBI" id="CHEBI:29105"/>
    </ligand>
</feature>
<feature type="binding site" evidence="2">
    <location>
        <position position="1516"/>
    </location>
    <ligand>
        <name>Zn(2+)</name>
        <dbReference type="ChEBI" id="CHEBI:29105"/>
    </ligand>
</feature>
<feature type="binding site" evidence="2">
    <location>
        <position position="1557"/>
    </location>
    <ligand>
        <name>Zn(2+)</name>
        <dbReference type="ChEBI" id="CHEBI:29105"/>
    </ligand>
</feature>
<feature type="binding site" evidence="2">
    <location>
        <position position="1559"/>
    </location>
    <ligand>
        <name>Zn(2+)</name>
        <dbReference type="ChEBI" id="CHEBI:29105"/>
    </ligand>
</feature>
<feature type="site" description="Important for activity" evidence="1">
    <location>
        <position position="1406"/>
    </location>
</feature>
<proteinExistence type="evidence at transcript level"/>
<keyword id="KW-0051">Antiviral defense</keyword>
<keyword id="KW-0930">Antiviral protein</keyword>
<keyword id="KW-0067">ATP-binding</keyword>
<keyword id="KW-0347">Helicase</keyword>
<keyword id="KW-0378">Hydrolase</keyword>
<keyword id="KW-0460">Magnesium</keyword>
<keyword id="KW-0464">Manganese</keyword>
<keyword id="KW-0479">Metal-binding</keyword>
<keyword id="KW-0547">Nucleotide-binding</keyword>
<keyword id="KW-1185">Reference proteome</keyword>
<keyword id="KW-0677">Repeat</keyword>
<keyword id="KW-0694">RNA-binding</keyword>
<keyword id="KW-0862">Zinc</keyword>
<sequence>MAVATRLPFIPPEATSQIIGGDEDLIDLSQEDVVSDNDDRGNASDVESEDGVKRWTVNPEPKPKKISAKKLADTAAFNSWIEEHQETLARDQRKAAIEAARVAGVDVLPAIGFDSERIITSPREYQVELFERAKQQNTIAVLDTGSGKTLIAAMLLRWVITGELEDREKGLPRRIAFFLVDKVALVFQQHSFLTKNLDFPMEKLCGEMVEGVESKAFWKEALEQNEVVVCTAEILSTALHHSWIRMDQINLLIFDEAHHTKKDHPYARIIKNFYIDEQLERRPRILGLTASPVDAKVDPRRAAAELEALLHSQIATAADPAALQHTICKPKTELVVEYVRGRPDSETVLNKQLRKLVGGQELFKKPLNFTTSAASKLGTWCADRYWQLFFKQEDIVKLESRTERDLMKVAALDEITEKHVKQVREAHELVNAHTFSPAALDPTMLSSKVIMLVRILRDQFERGVGAQRCIIFVRQRNTAMLLADLLQQPEIKSHIPSIAAEVLVGGGTTGSSYVNAKINFQQQNRIIRKFKLGEINCLFATSVAEEGLDIPDCNIVIRFDLYDTLIQCIQSRGRARRPDSRYIQMIEKGNYEHHSRILRAKGAEDVLRKFCEALPEDRKLTGNHMNLDYLLRKEKGKRQYTVPDTGAKLSYMQSLVCLANFTATLPHPPETSLSPEYYITTVPGGFQCEVVMPDASPIKSAVGKVHLSKGVAKCAAAFELCLALLKAGHLDNHLQSVFTKQLPEMRNARLAVSSKKKTEYAMRLKPELWSVRGVVTQLFATAFVLENPDTLGRSSRPLLLLSRSALPEVASFPLFFGTKRFSKVRCVPIPGSVQADDTLVEQLTRFTLKAFMDVFSKEYEATAVNLPYFLSPMDGGHGFDFRLAKSPAHLIDRKALAYVSENEKVPYTFLEPDDFFQDKFVVDPYDGARKFFTHHRRHDMKPTDPVPDGIVAPNHRAWRGLGTTHDILNYSNSLWSKSRGFMIFQADQPVVEAALISTRRDFLDDTLRDEDVEPQQCFLILEPMRISPIPADVVAMLLCFPSIIHRVESNLVALDACKLLGLDLRPDLALEAFTKDSDNSDEHDAEKENFQTGMGDNYERLEFLGDSFLKMATTIAIYTLIPDKGEFEYHVERMLLICNKNLFNNALEIGLEEYIRSMSFNRRQWYPEGLILKKGKSKDARQRHVLADKSIADVCEALIGAAYLTGQEKGSFDMAIKAVTAMVKDKKHRMISYGDYYAVYQKPTWQTESANSAQRDMAKKFSERMGYKFKHPRLLRAAFQHPTYPSLYERLPSYQRLEFLGDALFDMVAVDYLFRKFPAADPQWLTEHKMAMVSNQFLCCLSFHLGFNKCIATMSPSILKDIAEYVTEIEEALETAKQEAINAGKTADEYSRDYWVHITHASRLPKCLSDVVEAYIGAIFVDSEYDYSVVQNFFNMHVLPFFEDMHLYDTFANKHPVTFVANMMAHKFRCNEWRSFAKELDTDVTEGRGGRGGNGAVAGEISEINPPKVVSALLVHGKTVVHAVAASGRYAKSAMAKKAIKLLEGMSVEEFRERLGCNCKGVPMEVDGGVPEADVDGEVHGTAV</sequence>
<organism>
    <name type="scientific">Neurospora crassa (strain ATCC 24698 / 74-OR23-1A / CBS 708.71 / DSM 1257 / FGSC 987)</name>
    <dbReference type="NCBI Taxonomy" id="367110"/>
    <lineage>
        <taxon>Eukaryota</taxon>
        <taxon>Fungi</taxon>
        <taxon>Dikarya</taxon>
        <taxon>Ascomycota</taxon>
        <taxon>Pezizomycotina</taxon>
        <taxon>Sordariomycetes</taxon>
        <taxon>Sordariomycetidae</taxon>
        <taxon>Sordariales</taxon>
        <taxon>Sordariaceae</taxon>
        <taxon>Neurospora</taxon>
    </lineage>
</organism>
<accession>Q7S8J7</accession>
<evidence type="ECO:0000250" key="1"/>
<evidence type="ECO:0000250" key="2">
    <source>
        <dbReference type="UniProtKB" id="Q09884"/>
    </source>
</evidence>
<evidence type="ECO:0000255" key="3">
    <source>
        <dbReference type="PROSITE-ProRule" id="PRU00142"/>
    </source>
</evidence>
<evidence type="ECO:0000255" key="4">
    <source>
        <dbReference type="PROSITE-ProRule" id="PRU00177"/>
    </source>
</evidence>
<evidence type="ECO:0000255" key="5">
    <source>
        <dbReference type="PROSITE-ProRule" id="PRU00541"/>
    </source>
</evidence>
<evidence type="ECO:0000255" key="6">
    <source>
        <dbReference type="PROSITE-ProRule" id="PRU00542"/>
    </source>
</evidence>
<evidence type="ECO:0000255" key="7">
    <source>
        <dbReference type="PROSITE-ProRule" id="PRU00657"/>
    </source>
</evidence>
<evidence type="ECO:0000256" key="8">
    <source>
        <dbReference type="SAM" id="MobiDB-lite"/>
    </source>
</evidence>
<evidence type="ECO:0000269" key="9">
    <source>
    </source>
</evidence>
<evidence type="ECO:0000269" key="10">
    <source>
    </source>
</evidence>
<evidence type="ECO:0000269" key="11">
    <source>
    </source>
</evidence>
<comment type="function">
    <text evidence="9 10 11">Dicer-like endonuclease involved in cleaving double-stranded RNA in the RNA interference (RNAi) pathway. Produces 21 to 25 bp dsRNAs (siRNAs) which target the selective destruction of homologous RNAs leading to sequence-specific suppression of gene expression, called post-transcriptional gene silencing (PTGS). Part of a broad host defense response against viral infection and transposons. Controls the expression of the non-LTR retrotransposon Tad in the African strain, Adiomopoume.</text>
</comment>
<comment type="cofactor">
    <cofactor evidence="1">
        <name>Mg(2+)</name>
        <dbReference type="ChEBI" id="CHEBI:18420"/>
    </cofactor>
    <cofactor evidence="1">
        <name>Mn(2+)</name>
        <dbReference type="ChEBI" id="CHEBI:29035"/>
    </cofactor>
</comment>
<comment type="induction">
    <text evidence="11">By double-stranded RNA (dsRNA).</text>
</comment>
<comment type="similarity">
    <text evidence="7">Belongs to the helicase family. Dicer subfamily.</text>
</comment>
<protein>
    <recommendedName>
        <fullName>Dicer-like protein 1</fullName>
    </recommendedName>
    <domain>
        <recommendedName>
            <fullName>Endoribonuclease dcl-1</fullName>
            <ecNumber>3.1.26.-</ecNumber>
        </recommendedName>
    </domain>
    <domain>
        <recommendedName>
            <fullName>ATP-dependent helicase dcl-1</fullName>
            <ecNumber>3.6.4.-</ecNumber>
        </recommendedName>
    </domain>
</protein>
<reference key="1">
    <citation type="journal article" date="2003" name="Nature">
        <title>The genome sequence of the filamentous fungus Neurospora crassa.</title>
        <authorList>
            <person name="Galagan J.E."/>
            <person name="Calvo S.E."/>
            <person name="Borkovich K.A."/>
            <person name="Selker E.U."/>
            <person name="Read N.D."/>
            <person name="Jaffe D.B."/>
            <person name="FitzHugh W."/>
            <person name="Ma L.-J."/>
            <person name="Smirnov S."/>
            <person name="Purcell S."/>
            <person name="Rehman B."/>
            <person name="Elkins T."/>
            <person name="Engels R."/>
            <person name="Wang S."/>
            <person name="Nielsen C.B."/>
            <person name="Butler J."/>
            <person name="Endrizzi M."/>
            <person name="Qui D."/>
            <person name="Ianakiev P."/>
            <person name="Bell-Pedersen D."/>
            <person name="Nelson M.A."/>
            <person name="Werner-Washburne M."/>
            <person name="Selitrennikoff C.P."/>
            <person name="Kinsey J.A."/>
            <person name="Braun E.L."/>
            <person name="Zelter A."/>
            <person name="Schulte U."/>
            <person name="Kothe G.O."/>
            <person name="Jedd G."/>
            <person name="Mewes H.-W."/>
            <person name="Staben C."/>
            <person name="Marcotte E."/>
            <person name="Greenberg D."/>
            <person name="Roy A."/>
            <person name="Foley K."/>
            <person name="Naylor J."/>
            <person name="Stange-Thomann N."/>
            <person name="Barrett R."/>
            <person name="Gnerre S."/>
            <person name="Kamal M."/>
            <person name="Kamvysselis M."/>
            <person name="Mauceli E.W."/>
            <person name="Bielke C."/>
            <person name="Rudd S."/>
            <person name="Frishman D."/>
            <person name="Krystofova S."/>
            <person name="Rasmussen C."/>
            <person name="Metzenberg R.L."/>
            <person name="Perkins D.D."/>
            <person name="Kroken S."/>
            <person name="Cogoni C."/>
            <person name="Macino G."/>
            <person name="Catcheside D.E.A."/>
            <person name="Li W."/>
            <person name="Pratt R.J."/>
            <person name="Osmani S.A."/>
            <person name="DeSouza C.P.C."/>
            <person name="Glass N.L."/>
            <person name="Orbach M.J."/>
            <person name="Berglund J.A."/>
            <person name="Voelker R."/>
            <person name="Yarden O."/>
            <person name="Plamann M."/>
            <person name="Seiler S."/>
            <person name="Dunlap J.C."/>
            <person name="Radford A."/>
            <person name="Aramayo R."/>
            <person name="Natvig D.O."/>
            <person name="Alex L.A."/>
            <person name="Mannhaupt G."/>
            <person name="Ebbole D.J."/>
            <person name="Freitag M."/>
            <person name="Paulsen I."/>
            <person name="Sachs M.S."/>
            <person name="Lander E.S."/>
            <person name="Nusbaum C."/>
            <person name="Birren B.W."/>
        </authorList>
    </citation>
    <scope>NUCLEOTIDE SEQUENCE [LARGE SCALE GENOMIC DNA]</scope>
    <source>
        <strain>ATCC 24698 / 74-OR23-1A / CBS 708.71 / DSM 1257 / FGSC 987</strain>
    </source>
</reference>
<reference key="2">
    <citation type="journal article" date="2004" name="Mol. Cell. Biol.">
        <title>Redundancy of the two dicer genes in transgene-induced posttranscriptional gene silencing in Neurospora crassa.</title>
        <authorList>
            <person name="Catalanotto C."/>
            <person name="Pallotta M."/>
            <person name="ReFalo P."/>
            <person name="Sachs M.S."/>
            <person name="Vayssie L."/>
            <person name="Macino G."/>
            <person name="Cogoni C."/>
        </authorList>
    </citation>
    <scope>FUNCTION</scope>
</reference>
<reference key="3">
    <citation type="journal article" date="2005" name="Nucleic Acids Res.">
        <title>The post-transcriptional gene silencing machinery functions independently of DNA methylation to repress a LINE1-like retrotransposon in Neurospora crassa.</title>
        <authorList>
            <person name="Nolan T."/>
            <person name="Braccini L."/>
            <person name="Azzalin G."/>
            <person name="De Toni A."/>
            <person name="Macino G."/>
            <person name="Cogoni C."/>
        </authorList>
    </citation>
    <scope>FUNCTION</scope>
</reference>
<reference key="4">
    <citation type="journal article" date="2007" name="Mol. Cell. Biol.">
        <title>A double-stranded-RNA response program important for RNA interference efficiency.</title>
        <authorList>
            <person name="Choudhary S."/>
            <person name="Lee H.-C."/>
            <person name="Maiti M."/>
            <person name="He Q."/>
            <person name="Cheng P."/>
            <person name="Liu Q."/>
            <person name="Liu Y."/>
        </authorList>
    </citation>
    <scope>FUNCTION</scope>
    <scope>INDUCTION</scope>
</reference>
<dbReference type="EC" id="3.1.26.-"/>
<dbReference type="EC" id="3.6.4.-"/>
<dbReference type="EMBL" id="CM002239">
    <property type="protein sequence ID" value="EAA32662.1"/>
    <property type="molecule type" value="Genomic_DNA"/>
</dbReference>
<dbReference type="RefSeq" id="XP_961898.1">
    <property type="nucleotide sequence ID" value="XM_956805.2"/>
</dbReference>
<dbReference type="SMR" id="Q7S8J7"/>
<dbReference type="STRING" id="367110.Q7S8J7"/>
<dbReference type="PaxDb" id="5141-EFNCRP00000008415"/>
<dbReference type="EnsemblFungi" id="EAA32662">
    <property type="protein sequence ID" value="EAA32662"/>
    <property type="gene ID" value="NCU08270"/>
</dbReference>
<dbReference type="GeneID" id="3878050"/>
<dbReference type="KEGG" id="ncr:NCU08270"/>
<dbReference type="VEuPathDB" id="FungiDB:NCU08270"/>
<dbReference type="HOGENOM" id="CLU_000907_4_3_1"/>
<dbReference type="InParanoid" id="Q7S8J7"/>
<dbReference type="OMA" id="YHVNRMC"/>
<dbReference type="OrthoDB" id="416741at2759"/>
<dbReference type="Proteomes" id="UP000001805">
    <property type="component" value="Chromosome 4, Linkage Group IV"/>
</dbReference>
<dbReference type="GO" id="GO:0005737">
    <property type="term" value="C:cytoplasm"/>
    <property type="evidence" value="ECO:0000318"/>
    <property type="project" value="GO_Central"/>
</dbReference>
<dbReference type="GO" id="GO:0005634">
    <property type="term" value="C:nucleus"/>
    <property type="evidence" value="ECO:0000318"/>
    <property type="project" value="GO_Central"/>
</dbReference>
<dbReference type="GO" id="GO:0005524">
    <property type="term" value="F:ATP binding"/>
    <property type="evidence" value="ECO:0007669"/>
    <property type="project" value="UniProtKB-KW"/>
</dbReference>
<dbReference type="GO" id="GO:0003677">
    <property type="term" value="F:DNA binding"/>
    <property type="evidence" value="ECO:0007669"/>
    <property type="project" value="InterPro"/>
</dbReference>
<dbReference type="GO" id="GO:0004386">
    <property type="term" value="F:helicase activity"/>
    <property type="evidence" value="ECO:0007669"/>
    <property type="project" value="UniProtKB-KW"/>
</dbReference>
<dbReference type="GO" id="GO:0046872">
    <property type="term" value="F:metal ion binding"/>
    <property type="evidence" value="ECO:0007669"/>
    <property type="project" value="UniProtKB-KW"/>
</dbReference>
<dbReference type="GO" id="GO:0004525">
    <property type="term" value="F:ribonuclease III activity"/>
    <property type="evidence" value="ECO:0000318"/>
    <property type="project" value="GO_Central"/>
</dbReference>
<dbReference type="GO" id="GO:0003723">
    <property type="term" value="F:RNA binding"/>
    <property type="evidence" value="ECO:0000318"/>
    <property type="project" value="GO_Central"/>
</dbReference>
<dbReference type="GO" id="GO:0051607">
    <property type="term" value="P:defense response to virus"/>
    <property type="evidence" value="ECO:0007669"/>
    <property type="project" value="UniProtKB-KW"/>
</dbReference>
<dbReference type="GO" id="GO:0050688">
    <property type="term" value="P:regulation of defense response to virus"/>
    <property type="evidence" value="ECO:0007669"/>
    <property type="project" value="UniProtKB-KW"/>
</dbReference>
<dbReference type="GO" id="GO:0030422">
    <property type="term" value="P:siRNA processing"/>
    <property type="evidence" value="ECO:0000318"/>
    <property type="project" value="GO_Central"/>
</dbReference>
<dbReference type="CDD" id="cd18034">
    <property type="entry name" value="DEXHc_dicer"/>
    <property type="match status" value="1"/>
</dbReference>
<dbReference type="CDD" id="cd00593">
    <property type="entry name" value="RIBOc"/>
    <property type="match status" value="2"/>
</dbReference>
<dbReference type="CDD" id="cd18802">
    <property type="entry name" value="SF2_C_dicer"/>
    <property type="match status" value="1"/>
</dbReference>
<dbReference type="FunFam" id="1.10.1520.10:FF:000015">
    <property type="entry name" value="Dicer-like protein 1"/>
    <property type="match status" value="1"/>
</dbReference>
<dbReference type="FunFam" id="1.10.1520.10:FF:000043">
    <property type="entry name" value="Dicer-like protein 1"/>
    <property type="match status" value="1"/>
</dbReference>
<dbReference type="FunFam" id="3.30.160.380:FF:000004">
    <property type="entry name" value="Dicer-like protein 1"/>
    <property type="match status" value="1"/>
</dbReference>
<dbReference type="FunFam" id="3.40.50.300:FF:003240">
    <property type="entry name" value="Dicer-like protein 1"/>
    <property type="match status" value="1"/>
</dbReference>
<dbReference type="FunFam" id="3.40.50.300:FF:000628">
    <property type="entry name" value="Endoribonuclease Dicer"/>
    <property type="match status" value="1"/>
</dbReference>
<dbReference type="Gene3D" id="3.30.160.380">
    <property type="entry name" value="Dicer dimerisation domain"/>
    <property type="match status" value="1"/>
</dbReference>
<dbReference type="Gene3D" id="3.40.50.300">
    <property type="entry name" value="P-loop containing nucleotide triphosphate hydrolases"/>
    <property type="match status" value="2"/>
</dbReference>
<dbReference type="Gene3D" id="1.10.1520.10">
    <property type="entry name" value="Ribonuclease III domain"/>
    <property type="match status" value="2"/>
</dbReference>
<dbReference type="InterPro" id="IPR038248">
    <property type="entry name" value="Dicer_dimer_sf"/>
</dbReference>
<dbReference type="InterPro" id="IPR005034">
    <property type="entry name" value="Dicer_dimerisation_dom"/>
</dbReference>
<dbReference type="InterPro" id="IPR056755">
    <property type="entry name" value="DSRM_2"/>
</dbReference>
<dbReference type="InterPro" id="IPR006935">
    <property type="entry name" value="Helicase/UvrB_N"/>
</dbReference>
<dbReference type="InterPro" id="IPR014001">
    <property type="entry name" value="Helicase_ATP-bd"/>
</dbReference>
<dbReference type="InterPro" id="IPR001650">
    <property type="entry name" value="Helicase_C-like"/>
</dbReference>
<dbReference type="InterPro" id="IPR027417">
    <property type="entry name" value="P-loop_NTPase"/>
</dbReference>
<dbReference type="InterPro" id="IPR003100">
    <property type="entry name" value="PAZ_dom"/>
</dbReference>
<dbReference type="InterPro" id="IPR000999">
    <property type="entry name" value="RNase_III_dom"/>
</dbReference>
<dbReference type="InterPro" id="IPR036389">
    <property type="entry name" value="RNase_III_sf"/>
</dbReference>
<dbReference type="PANTHER" id="PTHR14950:SF62">
    <property type="entry name" value="DICER-LIKE PROTEIN 1"/>
    <property type="match status" value="1"/>
</dbReference>
<dbReference type="PANTHER" id="PTHR14950">
    <property type="entry name" value="DICER-RELATED"/>
    <property type="match status" value="1"/>
</dbReference>
<dbReference type="Pfam" id="PF03368">
    <property type="entry name" value="Dicer_dimer"/>
    <property type="match status" value="1"/>
</dbReference>
<dbReference type="Pfam" id="PF24995">
    <property type="entry name" value="DSRM_2"/>
    <property type="match status" value="1"/>
</dbReference>
<dbReference type="Pfam" id="PF00271">
    <property type="entry name" value="Helicase_C"/>
    <property type="match status" value="1"/>
</dbReference>
<dbReference type="Pfam" id="PF04851">
    <property type="entry name" value="ResIII"/>
    <property type="match status" value="1"/>
</dbReference>
<dbReference type="Pfam" id="PF00636">
    <property type="entry name" value="Ribonuclease_3"/>
    <property type="match status" value="2"/>
</dbReference>
<dbReference type="SMART" id="SM00487">
    <property type="entry name" value="DEXDc"/>
    <property type="match status" value="1"/>
</dbReference>
<dbReference type="SMART" id="SM00490">
    <property type="entry name" value="HELICc"/>
    <property type="match status" value="1"/>
</dbReference>
<dbReference type="SMART" id="SM00535">
    <property type="entry name" value="RIBOc"/>
    <property type="match status" value="2"/>
</dbReference>
<dbReference type="SUPFAM" id="SSF52540">
    <property type="entry name" value="P-loop containing nucleoside triphosphate hydrolases"/>
    <property type="match status" value="1"/>
</dbReference>
<dbReference type="SUPFAM" id="SSF69065">
    <property type="entry name" value="RNase III domain-like"/>
    <property type="match status" value="2"/>
</dbReference>
<dbReference type="PROSITE" id="PS51327">
    <property type="entry name" value="DICER_DSRBF"/>
    <property type="match status" value="1"/>
</dbReference>
<dbReference type="PROSITE" id="PS51192">
    <property type="entry name" value="HELICASE_ATP_BIND_1"/>
    <property type="match status" value="1"/>
</dbReference>
<dbReference type="PROSITE" id="PS51194">
    <property type="entry name" value="HELICASE_CTER"/>
    <property type="match status" value="1"/>
</dbReference>
<dbReference type="PROSITE" id="PS50821">
    <property type="entry name" value="PAZ"/>
    <property type="match status" value="1"/>
</dbReference>
<dbReference type="PROSITE" id="PS00517">
    <property type="entry name" value="RNASE_3_1"/>
    <property type="match status" value="2"/>
</dbReference>
<dbReference type="PROSITE" id="PS50142">
    <property type="entry name" value="RNASE_3_2"/>
    <property type="match status" value="2"/>
</dbReference>
<name>DCL1_NEUCR</name>